<sequence>MSIQSGEILETVKMVADQNFDVRTITIGIDLHDCISTDIDVLNQNIYNKITTVGKDLVATAKYLSAKYGVPIVNQRISVTPIAQIAAASKADSYVSVAQTLDKAAKAIGVSFIGGFSALVQKGMSPSDEVLIRSIPEAMKTTDIVCSSINVGSTRAGINMDAVKLAGETIKRTAEITPEGFGCAKIVVFCNAVEDNPFMAGAFHGSGEADAVINVGVSGPGVVKAALENSDATTLTEVAEVVKKTAFKITRVGELIGREASKMLNIPFGILDLSLAPTPAVGDSVARILEEMGLSVCGTHGTTAALALLNDAVKKGGMMASGSVGGLSGAFIPVSEDEGMIAAAEAGVLTLDKLEAMTAVCSVGLDMIAVPGDTPAHTISGIIADEAAIGMINSKTTAVRIIPVTGKTVGDSVEFGGLLGYAPVMPVKEGSCEVFVNRGGRIPAPVQSMKN</sequence>
<organism>
    <name type="scientific">Neisseria meningitidis serogroup C (strain 053442)</name>
    <dbReference type="NCBI Taxonomy" id="374833"/>
    <lineage>
        <taxon>Bacteria</taxon>
        <taxon>Pseudomonadati</taxon>
        <taxon>Pseudomonadota</taxon>
        <taxon>Betaproteobacteria</taxon>
        <taxon>Neisseriales</taxon>
        <taxon>Neisseriaceae</taxon>
        <taxon>Neisseria</taxon>
    </lineage>
</organism>
<protein>
    <recommendedName>
        <fullName evidence="1">UPF0210 protein NMCC_1554</fullName>
    </recommendedName>
</protein>
<accession>A9M1M1</accession>
<comment type="subunit">
    <text evidence="1">Homodimer.</text>
</comment>
<comment type="similarity">
    <text evidence="1">Belongs to the UPF0210 family.</text>
</comment>
<evidence type="ECO:0000255" key="1">
    <source>
        <dbReference type="HAMAP-Rule" id="MF_01221"/>
    </source>
</evidence>
<dbReference type="EMBL" id="CP000381">
    <property type="protein sequence ID" value="ABX73710.1"/>
    <property type="molecule type" value="Genomic_DNA"/>
</dbReference>
<dbReference type="RefSeq" id="WP_012221915.1">
    <property type="nucleotide sequence ID" value="NC_010120.1"/>
</dbReference>
<dbReference type="SMR" id="A9M1M1"/>
<dbReference type="KEGG" id="nmn:NMCC_1554"/>
<dbReference type="HOGENOM" id="CLU_048704_0_0_4"/>
<dbReference type="Proteomes" id="UP000001177">
    <property type="component" value="Chromosome"/>
</dbReference>
<dbReference type="CDD" id="cd08025">
    <property type="entry name" value="RNR_PFL_like_DUF711"/>
    <property type="match status" value="1"/>
</dbReference>
<dbReference type="Gene3D" id="3.20.70.20">
    <property type="match status" value="1"/>
</dbReference>
<dbReference type="HAMAP" id="MF_01221">
    <property type="entry name" value="UPF0210"/>
    <property type="match status" value="1"/>
</dbReference>
<dbReference type="InterPro" id="IPR007841">
    <property type="entry name" value="UPF0210"/>
</dbReference>
<dbReference type="NCBIfam" id="NF003700">
    <property type="entry name" value="PRK05313.1"/>
    <property type="match status" value="1"/>
</dbReference>
<dbReference type="PANTHER" id="PTHR37560:SF1">
    <property type="entry name" value="UPF0210 PROTEIN MJ1665"/>
    <property type="match status" value="1"/>
</dbReference>
<dbReference type="PANTHER" id="PTHR37560">
    <property type="entry name" value="UPF0210 PROTEIN SPR0218"/>
    <property type="match status" value="1"/>
</dbReference>
<dbReference type="Pfam" id="PF05167">
    <property type="entry name" value="DUF711"/>
    <property type="match status" value="1"/>
</dbReference>
<dbReference type="SUPFAM" id="SSF51998">
    <property type="entry name" value="PFL-like glycyl radical enzymes"/>
    <property type="match status" value="1"/>
</dbReference>
<reference key="1">
    <citation type="journal article" date="2008" name="Genomics">
        <title>Characterization of ST-4821 complex, a unique Neisseria meningitidis clone.</title>
        <authorList>
            <person name="Peng J."/>
            <person name="Yang L."/>
            <person name="Yang F."/>
            <person name="Yang J."/>
            <person name="Yan Y."/>
            <person name="Nie H."/>
            <person name="Zhang X."/>
            <person name="Xiong Z."/>
            <person name="Jiang Y."/>
            <person name="Cheng F."/>
            <person name="Xu X."/>
            <person name="Chen S."/>
            <person name="Sun L."/>
            <person name="Li W."/>
            <person name="Shen Y."/>
            <person name="Shao Z."/>
            <person name="Liang X."/>
            <person name="Xu J."/>
            <person name="Jin Q."/>
        </authorList>
    </citation>
    <scope>NUCLEOTIDE SEQUENCE [LARGE SCALE GENOMIC DNA]</scope>
    <source>
        <strain>053442</strain>
    </source>
</reference>
<gene>
    <name type="ordered locus">NMCC_1554</name>
</gene>
<feature type="chain" id="PRO_1000085664" description="UPF0210 protein NMCC_1554">
    <location>
        <begin position="1"/>
        <end position="451"/>
    </location>
</feature>
<name>Y1554_NEIM0</name>
<proteinExistence type="inferred from homology"/>